<dbReference type="EC" id="3.1.3.16" evidence="2"/>
<dbReference type="EMBL" id="AF305635">
    <property type="protein sequence ID" value="AAM21172.1"/>
    <property type="molecule type" value="mRNA"/>
</dbReference>
<dbReference type="SMR" id="Q8LSN3"/>
<dbReference type="EnsemblPlants" id="Psat6g101520.2">
    <property type="protein sequence ID" value="Psat6g101520.2.cds"/>
    <property type="gene ID" value="Psat6g101520"/>
</dbReference>
<dbReference type="Gramene" id="Psat6g101520.2">
    <property type="protein sequence ID" value="Psat6g101520.2.cds"/>
    <property type="gene ID" value="Psat6g101520"/>
</dbReference>
<dbReference type="OrthoDB" id="1930084at2759"/>
<dbReference type="GO" id="GO:0005737">
    <property type="term" value="C:cytoplasm"/>
    <property type="evidence" value="ECO:0000314"/>
    <property type="project" value="UniProtKB"/>
</dbReference>
<dbReference type="GO" id="GO:0004722">
    <property type="term" value="F:protein serine/threonine phosphatase activity"/>
    <property type="evidence" value="ECO:0000314"/>
    <property type="project" value="UniProtKB"/>
</dbReference>
<dbReference type="GO" id="GO:0008270">
    <property type="term" value="F:zinc ion binding"/>
    <property type="evidence" value="ECO:0000314"/>
    <property type="project" value="UniProtKB"/>
</dbReference>
<dbReference type="GO" id="GO:0009910">
    <property type="term" value="P:negative regulation of flower development"/>
    <property type="evidence" value="ECO:0000315"/>
    <property type="project" value="UniProtKB"/>
</dbReference>
<dbReference type="CDD" id="cd07415">
    <property type="entry name" value="MPP_PP2A_PP4_PP6"/>
    <property type="match status" value="1"/>
</dbReference>
<dbReference type="FunFam" id="3.60.21.10:FF:000005">
    <property type="entry name" value="Serine/threonine-protein phosphatase"/>
    <property type="match status" value="1"/>
</dbReference>
<dbReference type="Gene3D" id="3.60.21.10">
    <property type="match status" value="1"/>
</dbReference>
<dbReference type="InterPro" id="IPR004843">
    <property type="entry name" value="Calcineurin-like_PHP_ApaH"/>
</dbReference>
<dbReference type="InterPro" id="IPR029052">
    <property type="entry name" value="Metallo-depent_PP-like"/>
</dbReference>
<dbReference type="InterPro" id="IPR047129">
    <property type="entry name" value="PPA2-like"/>
</dbReference>
<dbReference type="InterPro" id="IPR006186">
    <property type="entry name" value="Ser/Thr-sp_prot-phosphatase"/>
</dbReference>
<dbReference type="PANTHER" id="PTHR45619">
    <property type="entry name" value="SERINE/THREONINE-PROTEIN PHOSPHATASE PP2A-RELATED"/>
    <property type="match status" value="1"/>
</dbReference>
<dbReference type="Pfam" id="PF00149">
    <property type="entry name" value="Metallophos"/>
    <property type="match status" value="1"/>
</dbReference>
<dbReference type="PRINTS" id="PR00114">
    <property type="entry name" value="STPHPHTASE"/>
</dbReference>
<dbReference type="SMART" id="SM00156">
    <property type="entry name" value="PP2Ac"/>
    <property type="match status" value="1"/>
</dbReference>
<dbReference type="SUPFAM" id="SSF56300">
    <property type="entry name" value="Metallo-dependent phosphatases"/>
    <property type="match status" value="1"/>
</dbReference>
<dbReference type="PROSITE" id="PS00125">
    <property type="entry name" value="SER_THR_PHOSPHATASE"/>
    <property type="match status" value="1"/>
</dbReference>
<name>FYPP_PEA</name>
<comment type="function">
    <text evidence="2 4">Catalytic subunit of protein phosphatase 6 (PP6) (Probable). Dephosphorylates phosphorylated phytochromes, with a preference toward Pfr forms. Plays a major role in the photoperiodic control of flowering time in long days by modulating phytochrome signals in flowering time control.</text>
</comment>
<comment type="catalytic activity">
    <reaction evidence="2">
        <text>O-phospho-L-seryl-[protein] + H2O = L-seryl-[protein] + phosphate</text>
        <dbReference type="Rhea" id="RHEA:20629"/>
        <dbReference type="Rhea" id="RHEA-COMP:9863"/>
        <dbReference type="Rhea" id="RHEA-COMP:11604"/>
        <dbReference type="ChEBI" id="CHEBI:15377"/>
        <dbReference type="ChEBI" id="CHEBI:29999"/>
        <dbReference type="ChEBI" id="CHEBI:43474"/>
        <dbReference type="ChEBI" id="CHEBI:83421"/>
        <dbReference type="EC" id="3.1.3.16"/>
    </reaction>
    <physiologicalReaction direction="left-to-right" evidence="2">
        <dbReference type="Rhea" id="RHEA:20630"/>
    </physiologicalReaction>
</comment>
<comment type="catalytic activity">
    <reaction evidence="2">
        <text>O-phospho-L-threonyl-[protein] + H2O = L-threonyl-[protein] + phosphate</text>
        <dbReference type="Rhea" id="RHEA:47004"/>
        <dbReference type="Rhea" id="RHEA-COMP:11060"/>
        <dbReference type="Rhea" id="RHEA-COMP:11605"/>
        <dbReference type="ChEBI" id="CHEBI:15377"/>
        <dbReference type="ChEBI" id="CHEBI:30013"/>
        <dbReference type="ChEBI" id="CHEBI:43474"/>
        <dbReference type="ChEBI" id="CHEBI:61977"/>
        <dbReference type="EC" id="3.1.3.16"/>
    </reaction>
    <physiologicalReaction direction="left-to-right" evidence="2">
        <dbReference type="Rhea" id="RHEA:47005"/>
    </physiologicalReaction>
</comment>
<comment type="cofactor">
    <cofactor evidence="2">
        <name>Zn(2+)</name>
        <dbReference type="ChEBI" id="CHEBI:29105"/>
    </cofactor>
    <text evidence="1">Binds 2 zinc ions per subunit.</text>
</comment>
<comment type="subunit">
    <text evidence="2">Interacts with PHYA and PHYB, mostly when they are phosphorylated and in Pfr forms.</text>
</comment>
<comment type="subcellular location">
    <subcellularLocation>
        <location evidence="2">Cytoplasm</location>
    </subcellularLocation>
</comment>
<comment type="tissue specificity">
    <text evidence="2">Mostly expressed in flowers and stems.</text>
</comment>
<comment type="similarity">
    <text evidence="4">Belongs to the PPP phosphatase family. PP-6 (PP-V) subfamily.</text>
</comment>
<feature type="chain" id="PRO_0000308994" description="Phytochrome-associated serine/threonine-protein phosphatase">
    <location>
        <begin position="1"/>
        <end position="303"/>
    </location>
</feature>
<feature type="active site" description="Proton donor" evidence="1">
    <location>
        <position position="111"/>
    </location>
</feature>
<feature type="binding site" evidence="1">
    <location>
        <position position="50"/>
    </location>
    <ligand>
        <name>Zn(2+)</name>
        <dbReference type="ChEBI" id="CHEBI:29105"/>
        <label>1</label>
    </ligand>
</feature>
<feature type="binding site" evidence="1">
    <location>
        <position position="52"/>
    </location>
    <ligand>
        <name>Zn(2+)</name>
        <dbReference type="ChEBI" id="CHEBI:29105"/>
        <label>1</label>
    </ligand>
</feature>
<feature type="binding site" evidence="1">
    <location>
        <position position="78"/>
    </location>
    <ligand>
        <name>Zn(2+)</name>
        <dbReference type="ChEBI" id="CHEBI:29105"/>
        <label>1</label>
    </ligand>
</feature>
<feature type="binding site" evidence="1">
    <location>
        <position position="78"/>
    </location>
    <ligand>
        <name>Zn(2+)</name>
        <dbReference type="ChEBI" id="CHEBI:29105"/>
        <label>2</label>
    </ligand>
</feature>
<feature type="binding site" evidence="1">
    <location>
        <position position="110"/>
    </location>
    <ligand>
        <name>Zn(2+)</name>
        <dbReference type="ChEBI" id="CHEBI:29105"/>
        <label>2</label>
    </ligand>
</feature>
<feature type="binding site" evidence="1">
    <location>
        <position position="160"/>
    </location>
    <ligand>
        <name>Zn(2+)</name>
        <dbReference type="ChEBI" id="CHEBI:29105"/>
        <label>2</label>
    </ligand>
</feature>
<feature type="binding site" evidence="1">
    <location>
        <position position="234"/>
    </location>
    <ligand>
        <name>Zn(2+)</name>
        <dbReference type="ChEBI" id="CHEBI:29105"/>
        <label>2</label>
    </ligand>
</feature>
<proteinExistence type="evidence at protein level"/>
<evidence type="ECO:0000250" key="1">
    <source>
        <dbReference type="UniProtKB" id="P36873"/>
    </source>
</evidence>
<evidence type="ECO:0000269" key="2">
    <source>
    </source>
</evidence>
<evidence type="ECO:0000303" key="3">
    <source>
    </source>
</evidence>
<evidence type="ECO:0000305" key="4"/>
<protein>
    <recommendedName>
        <fullName evidence="3">Phytochrome-associated serine/threonine-protein phosphatase</fullName>
        <ecNumber evidence="2">3.1.3.16</ecNumber>
    </recommendedName>
    <alternativeName>
        <fullName evidence="3">PsFyPP</fullName>
    </alternativeName>
</protein>
<keyword id="KW-0963">Cytoplasm</keyword>
<keyword id="KW-0378">Hydrolase</keyword>
<keyword id="KW-0464">Manganese</keyword>
<keyword id="KW-0479">Metal-binding</keyword>
<keyword id="KW-0904">Protein phosphatase</keyword>
<keyword id="KW-0862">Zinc</keyword>
<organism>
    <name type="scientific">Pisum sativum</name>
    <name type="common">Garden pea</name>
    <name type="synonym">Lathyrus oleraceus</name>
    <dbReference type="NCBI Taxonomy" id="3888"/>
    <lineage>
        <taxon>Eukaryota</taxon>
        <taxon>Viridiplantae</taxon>
        <taxon>Streptophyta</taxon>
        <taxon>Embryophyta</taxon>
        <taxon>Tracheophyta</taxon>
        <taxon>Spermatophyta</taxon>
        <taxon>Magnoliopsida</taxon>
        <taxon>eudicotyledons</taxon>
        <taxon>Gunneridae</taxon>
        <taxon>Pentapetalae</taxon>
        <taxon>rosids</taxon>
        <taxon>fabids</taxon>
        <taxon>Fabales</taxon>
        <taxon>Fabaceae</taxon>
        <taxon>Papilionoideae</taxon>
        <taxon>50 kb inversion clade</taxon>
        <taxon>NPAAA clade</taxon>
        <taxon>Hologalegina</taxon>
        <taxon>IRL clade</taxon>
        <taxon>Fabeae</taxon>
        <taxon>Pisum</taxon>
    </lineage>
</organism>
<reference key="1">
    <citation type="journal article" date="2002" name="Plant Cell">
        <title>A phytochrome-associated protein phosphatase 2A modulates light signals in flowering time control in Arabidopsis.</title>
        <authorList>
            <person name="Kim D.-H."/>
            <person name="Kang J.-G."/>
            <person name="Yang S.-S."/>
            <person name="Chung K.-S."/>
            <person name="Song P.-S."/>
            <person name="Park C.-M."/>
        </authorList>
    </citation>
    <scope>NUCLEOTIDE SEQUENCE [MRNA]</scope>
    <scope>FUNCTION</scope>
    <scope>CATALYTIC ACTIVITY</scope>
    <scope>COFACTOR</scope>
    <scope>SUBCELLULAR LOCATION</scope>
    <scope>TISSUE SPECIFICITY</scope>
    <scope>INTERACTION WITH PHYA AND PHYB</scope>
</reference>
<accession>Q8LSN3</accession>
<gene>
    <name evidence="3" type="primary">FYPP</name>
</gene>
<sequence length="303" mass="34871">MDLDQWISKVKDGQHLLEDELQLLCEYVKEILIEESNVQPVNSPVTVCGDIHGQFHDLMKLFQTGGHVPETNYIFMGDFVDRGYNSLEVFTILLLLKARYPANITLLRGNHESRQLTQVYGFYDECQRKYGNANAWRYCTDVFDYLTLSAIIDGTVLCVHGGLSPDIRTIDQIRVIERNCEIPHEGPFCDLMWSDPEDIETWAVSPRGAGWLFGSRVTSEFNHINNLDLVCRAHQLVQEGLKYMFQDKGLVTVWSAPNYCYRCGNVASILSFNENMEREVKFFTETEENNQMRGPRTGVPYFL</sequence>